<evidence type="ECO:0000255" key="1"/>
<evidence type="ECO:0000256" key="2">
    <source>
        <dbReference type="SAM" id="MobiDB-lite"/>
    </source>
</evidence>
<evidence type="ECO:0000305" key="3"/>
<organism>
    <name type="scientific">Neisseria meningitidis serogroup B (strain ATCC BAA-335 / MC58)</name>
    <dbReference type="NCBI Taxonomy" id="122586"/>
    <lineage>
        <taxon>Bacteria</taxon>
        <taxon>Pseudomonadati</taxon>
        <taxon>Pseudomonadota</taxon>
        <taxon>Betaproteobacteria</taxon>
        <taxon>Neisseriales</taxon>
        <taxon>Neisseriaceae</taxon>
        <taxon>Neisseria</taxon>
    </lineage>
</organism>
<sequence>MRYKPLLLALMLVFSTPAVAAHDAAHNRSAEVKKQTKNKKEQPEAAEGKKEKGKNGAVKDKKTGGKEAAKEGKESKKTAKNRKEAEKEATSRQSARKGREGDKKSKAEHKKAHGKPVSGSKEKNAKTQPENKQGKKEAKGQGNPRKGGKAEKDTVSANKKVRSDKNGKAVKQDKKYREEKNAKTDSDELKAAVAAATNDVENKKALLKQSEGMLLHVSNSLKQLQEERIRQERIRQARGNLASVNRKQREAWDKFQKLNTELNRLKTEVAATKAQISRFVSGNYKNSQPNAVALFLKNAEPGQKNRFLRYTRYVNASNREVVKDLEKQQKALAVQEQKINNELARLKKIQANVQSLLKKQGVTDAAEQTESRRQNAKIAKDARKLLEQKGNEQQLNKLLSNLEKKKAEHRIQDAEAKRKLAEARLAAAEKARKEAAQQKAEARRAEMSNLTAEDRNIQAPSVMGIGSADGFSRMQGRLKKPVDGVPTGLFGQNRSGGDIWKGVFYSTAPATVESIAPGTVSYADELDGYGKVVVVDHGENYISIYAGLSEISVGKGYMVAAGSKIGSSGSLPDGEEGLYLQIRYQGQVLNPSSWIR</sequence>
<keyword id="KW-0175">Coiled coil</keyword>
<keyword id="KW-1185">Reference proteome</keyword>
<keyword id="KW-0732">Signal</keyword>
<name>Y1333_NEIMB</name>
<reference key="1">
    <citation type="journal article" date="2000" name="Science">
        <title>Complete genome sequence of Neisseria meningitidis serogroup B strain MC58.</title>
        <authorList>
            <person name="Tettelin H."/>
            <person name="Saunders N.J."/>
            <person name="Heidelberg J.F."/>
            <person name="Jeffries A.C."/>
            <person name="Nelson K.E."/>
            <person name="Eisen J.A."/>
            <person name="Ketchum K.A."/>
            <person name="Hood D.W."/>
            <person name="Peden J.F."/>
            <person name="Dodson R.J."/>
            <person name="Nelson W.C."/>
            <person name="Gwinn M.L."/>
            <person name="DeBoy R.T."/>
            <person name="Peterson J.D."/>
            <person name="Hickey E.K."/>
            <person name="Haft D.H."/>
            <person name="Salzberg S.L."/>
            <person name="White O."/>
            <person name="Fleischmann R.D."/>
            <person name="Dougherty B.A."/>
            <person name="Mason T.M."/>
            <person name="Ciecko A."/>
            <person name="Parksey D.S."/>
            <person name="Blair E."/>
            <person name="Cittone H."/>
            <person name="Clark E.B."/>
            <person name="Cotton M.D."/>
            <person name="Utterback T.R."/>
            <person name="Khouri H.M."/>
            <person name="Qin H."/>
            <person name="Vamathevan J.J."/>
            <person name="Gill J."/>
            <person name="Scarlato V."/>
            <person name="Masignani V."/>
            <person name="Pizza M."/>
            <person name="Grandi G."/>
            <person name="Sun L."/>
            <person name="Smith H.O."/>
            <person name="Fraser C.M."/>
            <person name="Moxon E.R."/>
            <person name="Rappuoli R."/>
            <person name="Venter J.C."/>
        </authorList>
    </citation>
    <scope>NUCLEOTIDE SEQUENCE [LARGE SCALE GENOMIC DNA]</scope>
    <source>
        <strain>ATCC BAA-335 / MC58</strain>
    </source>
</reference>
<reference key="2">
    <citation type="journal article" date="2005" name="Hum. Vaccin.">
        <title>Characterization of the protein content of a meningococcal outer membrane vesicle vaccine by polyacrylamide gel electrophoresis and mass spectrometry.</title>
        <authorList>
            <person name="Vipond C."/>
            <person name="Wheeler J.X."/>
            <person name="Jones C."/>
            <person name="Feavers I.M."/>
            <person name="Suker J."/>
        </authorList>
    </citation>
    <scope>IDENTIFICATION BY MASS SPECTROMETRY [LARGE SCALE ANALYSIS]</scope>
</reference>
<proteinExistence type="evidence at protein level"/>
<gene>
    <name type="ordered locus">NMB1333</name>
</gene>
<protein>
    <recommendedName>
        <fullName>Uncharacterized protein NMB1333</fullName>
    </recommendedName>
</protein>
<feature type="signal peptide" evidence="1">
    <location>
        <begin position="1"/>
        <end position="20"/>
    </location>
</feature>
<feature type="chain" id="PRO_0000320334" description="Uncharacterized protein NMB1333">
    <location>
        <begin position="21"/>
        <end position="596"/>
    </location>
</feature>
<feature type="region of interest" description="Disordered" evidence="2">
    <location>
        <begin position="25"/>
        <end position="184"/>
    </location>
</feature>
<feature type="coiled-coil region" evidence="1">
    <location>
        <begin position="177"/>
        <end position="281"/>
    </location>
</feature>
<feature type="coiled-coil region" evidence="1">
    <location>
        <begin position="318"/>
        <end position="454"/>
    </location>
</feature>
<feature type="compositionally biased region" description="Basic and acidic residues" evidence="2">
    <location>
        <begin position="25"/>
        <end position="90"/>
    </location>
</feature>
<feature type="compositionally biased region" description="Basic and acidic residues" evidence="2">
    <location>
        <begin position="161"/>
        <end position="184"/>
    </location>
</feature>
<dbReference type="EMBL" id="AE002098">
    <property type="protein sequence ID" value="AAF41708.1"/>
    <property type="molecule type" value="Genomic_DNA"/>
</dbReference>
<dbReference type="PIR" id="H81095">
    <property type="entry name" value="H81095"/>
</dbReference>
<dbReference type="RefSeq" id="NP_274352.1">
    <property type="nucleotide sequence ID" value="NC_003112.2"/>
</dbReference>
<dbReference type="RefSeq" id="WP_002222357.1">
    <property type="nucleotide sequence ID" value="NC_003112.2"/>
</dbReference>
<dbReference type="SMR" id="Q9JZ20"/>
<dbReference type="FunCoup" id="Q9JZ20">
    <property type="interactions" value="73"/>
</dbReference>
<dbReference type="STRING" id="122586.NMB1333"/>
<dbReference type="PaxDb" id="122586-NMB1333"/>
<dbReference type="KEGG" id="nme:NMB1333"/>
<dbReference type="PATRIC" id="fig|122586.8.peg.1672"/>
<dbReference type="HOGENOM" id="CLU_029425_4_0_4"/>
<dbReference type="InParanoid" id="Q9JZ20"/>
<dbReference type="OrthoDB" id="9784703at2"/>
<dbReference type="Proteomes" id="UP000000425">
    <property type="component" value="Chromosome"/>
</dbReference>
<dbReference type="GO" id="GO:0004222">
    <property type="term" value="F:metalloendopeptidase activity"/>
    <property type="evidence" value="ECO:0000318"/>
    <property type="project" value="GO_Central"/>
</dbReference>
<dbReference type="CDD" id="cd12797">
    <property type="entry name" value="M23_peptidase"/>
    <property type="match status" value="1"/>
</dbReference>
<dbReference type="FunFam" id="2.70.70.10:FF:000037">
    <property type="entry name" value="M23 peptidase domain protein"/>
    <property type="match status" value="1"/>
</dbReference>
<dbReference type="Gene3D" id="2.70.70.10">
    <property type="entry name" value="Glucose Permease (Domain IIA)"/>
    <property type="match status" value="1"/>
</dbReference>
<dbReference type="InterPro" id="IPR050570">
    <property type="entry name" value="Cell_wall_metabolism_enzyme"/>
</dbReference>
<dbReference type="InterPro" id="IPR011055">
    <property type="entry name" value="Dup_hybrid_motif"/>
</dbReference>
<dbReference type="InterPro" id="IPR016047">
    <property type="entry name" value="Peptidase_M23"/>
</dbReference>
<dbReference type="PANTHER" id="PTHR21666">
    <property type="entry name" value="PEPTIDASE-RELATED"/>
    <property type="match status" value="1"/>
</dbReference>
<dbReference type="PANTHER" id="PTHR21666:SF291">
    <property type="entry name" value="STAGE II SPORULATION PROTEIN Q"/>
    <property type="match status" value="1"/>
</dbReference>
<dbReference type="Pfam" id="PF01551">
    <property type="entry name" value="Peptidase_M23"/>
    <property type="match status" value="1"/>
</dbReference>
<dbReference type="SUPFAM" id="SSF51261">
    <property type="entry name" value="Duplicated hybrid motif"/>
    <property type="match status" value="1"/>
</dbReference>
<comment type="miscellaneous">
    <text>Present in outer membrane vesicle formulations which are used as vaccines in human.</text>
</comment>
<comment type="similarity">
    <text evidence="3">Belongs to the peptidase M23B family.</text>
</comment>
<accession>Q9JZ20</accession>